<reference key="1">
    <citation type="journal article" date="2008" name="Chem. Biol. Interact.">
        <title>Extending the Bacillus cereus group genomics to putative food-borne pathogens of different toxicity.</title>
        <authorList>
            <person name="Lapidus A."/>
            <person name="Goltsman E."/>
            <person name="Auger S."/>
            <person name="Galleron N."/>
            <person name="Segurens B."/>
            <person name="Dossat C."/>
            <person name="Land M.L."/>
            <person name="Broussolle V."/>
            <person name="Brillard J."/>
            <person name="Guinebretiere M.-H."/>
            <person name="Sanchis V."/>
            <person name="Nguen-the C."/>
            <person name="Lereclus D."/>
            <person name="Richardson P."/>
            <person name="Wincker P."/>
            <person name="Weissenbach J."/>
            <person name="Ehrlich S.D."/>
            <person name="Sorokin A."/>
        </authorList>
    </citation>
    <scope>NUCLEOTIDE SEQUENCE [LARGE SCALE GENOMIC DNA]</scope>
    <source>
        <strain>DSM 22905 / CIP 110041 / 391-98 / NVH 391-98</strain>
    </source>
</reference>
<sequence length="346" mass="38479">MNTQLFSPFTIQNVTLKNRIVMSPMCMYSSENEDGKVTNFHLIHYGTRAMGQVGLVMLEATAVAAEGRISNKDLGIWNDEHIEGLQKTVSFIKEHDSKAAIQLAHAGRKAELHTDPVAPSAIPFNDKMKVPVAMSKEQIQDTITAFQKAAIRSKQAGFDVIELHGAHGYLINEFLSPLSNKRTDEYGGTAENRYRFLREIIHAVKEVWEGPLFVRISADDYHPEGLTVNDYVQFAKWMKEQGVDLIDCSSGAVVPAHIDVYPGYQVKYAKHLKEHAQIATGAVGLITSGVQAEQILVNSEADLIFVGRELLRNPYFPRTAANELGFELKDPHQYSRAPGKIANTSK</sequence>
<protein>
    <recommendedName>
        <fullName evidence="1">NADPH dehydrogenase</fullName>
        <ecNumber evidence="1">1.6.99.1</ecNumber>
    </recommendedName>
</protein>
<comment type="function">
    <text evidence="1">Catalyzes the reduction of the double bond of an array of alpha,beta-unsaturated aldehydes and ketones. It also reduces the nitro group of nitroester and nitroaromatic compounds. It could have a role in detoxification processes.</text>
</comment>
<comment type="catalytic activity">
    <reaction evidence="1">
        <text>A + NADPH + H(+) = AH2 + NADP(+)</text>
        <dbReference type="Rhea" id="RHEA:13149"/>
        <dbReference type="ChEBI" id="CHEBI:13193"/>
        <dbReference type="ChEBI" id="CHEBI:15378"/>
        <dbReference type="ChEBI" id="CHEBI:17499"/>
        <dbReference type="ChEBI" id="CHEBI:57783"/>
        <dbReference type="ChEBI" id="CHEBI:58349"/>
        <dbReference type="EC" id="1.6.99.1"/>
    </reaction>
</comment>
<comment type="cofactor">
    <cofactor evidence="1">
        <name>FMN</name>
        <dbReference type="ChEBI" id="CHEBI:58210"/>
    </cofactor>
</comment>
<comment type="subunit">
    <text evidence="1">Homotetramer.</text>
</comment>
<comment type="similarity">
    <text evidence="1">Belongs to the NADH:flavin oxidoreductase/NADH oxidase family. NamA subfamily.</text>
</comment>
<organism>
    <name type="scientific">Bacillus cytotoxicus (strain DSM 22905 / CIP 110041 / 391-98 / NVH 391-98)</name>
    <dbReference type="NCBI Taxonomy" id="315749"/>
    <lineage>
        <taxon>Bacteria</taxon>
        <taxon>Bacillati</taxon>
        <taxon>Bacillota</taxon>
        <taxon>Bacilli</taxon>
        <taxon>Bacillales</taxon>
        <taxon>Bacillaceae</taxon>
        <taxon>Bacillus</taxon>
        <taxon>Bacillus cereus group</taxon>
    </lineage>
</organism>
<gene>
    <name evidence="1" type="primary">namA</name>
    <name type="ordered locus">Bcer98_1529</name>
</gene>
<name>NAMA_BACCN</name>
<feature type="chain" id="PRO_0000323520" description="NADPH dehydrogenase">
    <location>
        <begin position="1"/>
        <end position="346"/>
    </location>
</feature>
<feature type="binding site" evidence="1">
    <location>
        <begin position="23"/>
        <end position="26"/>
    </location>
    <ligand>
        <name>FMN</name>
        <dbReference type="ChEBI" id="CHEBI:58210"/>
    </ligand>
</feature>
<feature type="binding site" evidence="1">
    <location>
        <position position="28"/>
    </location>
    <ligand>
        <name>substrate</name>
    </ligand>
</feature>
<feature type="binding site" evidence="1">
    <location>
        <position position="60"/>
    </location>
    <ligand>
        <name>FMN</name>
        <dbReference type="ChEBI" id="CHEBI:58210"/>
    </ligand>
</feature>
<feature type="binding site" evidence="1">
    <location>
        <position position="102"/>
    </location>
    <ligand>
        <name>FMN</name>
        <dbReference type="ChEBI" id="CHEBI:58210"/>
    </ligand>
</feature>
<feature type="binding site" evidence="1">
    <location>
        <begin position="164"/>
        <end position="167"/>
    </location>
    <ligand>
        <name>substrate</name>
    </ligand>
</feature>
<feature type="binding site" evidence="1">
    <location>
        <position position="215"/>
    </location>
    <ligand>
        <name>FMN</name>
        <dbReference type="ChEBI" id="CHEBI:58210"/>
    </ligand>
</feature>
<feature type="binding site" evidence="1">
    <location>
        <begin position="307"/>
        <end position="308"/>
    </location>
    <ligand>
        <name>FMN</name>
        <dbReference type="ChEBI" id="CHEBI:58210"/>
    </ligand>
</feature>
<dbReference type="EC" id="1.6.99.1" evidence="1"/>
<dbReference type="EMBL" id="CP000764">
    <property type="protein sequence ID" value="ABS21842.1"/>
    <property type="molecule type" value="Genomic_DNA"/>
</dbReference>
<dbReference type="RefSeq" id="WP_012094016.1">
    <property type="nucleotide sequence ID" value="NC_009674.1"/>
</dbReference>
<dbReference type="SMR" id="A7GNY4"/>
<dbReference type="STRING" id="315749.Bcer98_1529"/>
<dbReference type="GeneID" id="33896863"/>
<dbReference type="KEGG" id="bcy:Bcer98_1529"/>
<dbReference type="eggNOG" id="COG1902">
    <property type="taxonomic scope" value="Bacteria"/>
</dbReference>
<dbReference type="HOGENOM" id="CLU_012153_2_1_9"/>
<dbReference type="OrthoDB" id="9772736at2"/>
<dbReference type="Proteomes" id="UP000002300">
    <property type="component" value="Chromosome"/>
</dbReference>
<dbReference type="GO" id="GO:0010181">
    <property type="term" value="F:FMN binding"/>
    <property type="evidence" value="ECO:0007669"/>
    <property type="project" value="UniProtKB-UniRule"/>
</dbReference>
<dbReference type="GO" id="GO:0050661">
    <property type="term" value="F:NADP binding"/>
    <property type="evidence" value="ECO:0007669"/>
    <property type="project" value="UniProtKB-UniRule"/>
</dbReference>
<dbReference type="GO" id="GO:0003959">
    <property type="term" value="F:NADPH dehydrogenase activity"/>
    <property type="evidence" value="ECO:0007669"/>
    <property type="project" value="UniProtKB-UniRule"/>
</dbReference>
<dbReference type="GO" id="GO:0009636">
    <property type="term" value="P:response to toxic substance"/>
    <property type="evidence" value="ECO:0007669"/>
    <property type="project" value="UniProtKB-KW"/>
</dbReference>
<dbReference type="CDD" id="cd02932">
    <property type="entry name" value="OYE_YqiM_FMN"/>
    <property type="match status" value="1"/>
</dbReference>
<dbReference type="Gene3D" id="3.20.20.70">
    <property type="entry name" value="Aldolase class I"/>
    <property type="match status" value="1"/>
</dbReference>
<dbReference type="HAMAP" id="MF_01614">
    <property type="entry name" value="NamA"/>
    <property type="match status" value="1"/>
</dbReference>
<dbReference type="InterPro" id="IPR013785">
    <property type="entry name" value="Aldolase_TIM"/>
</dbReference>
<dbReference type="InterPro" id="IPR023663">
    <property type="entry name" value="NADPH_DH_bac"/>
</dbReference>
<dbReference type="InterPro" id="IPR001155">
    <property type="entry name" value="OxRdtase_FMN_N"/>
</dbReference>
<dbReference type="InterPro" id="IPR044152">
    <property type="entry name" value="YqjM-like"/>
</dbReference>
<dbReference type="NCBIfam" id="NF010047">
    <property type="entry name" value="PRK13523.1"/>
    <property type="match status" value="1"/>
</dbReference>
<dbReference type="PANTHER" id="PTHR43303">
    <property type="entry name" value="NADPH DEHYDROGENASE C23G7.10C-RELATED"/>
    <property type="match status" value="1"/>
</dbReference>
<dbReference type="PANTHER" id="PTHR43303:SF4">
    <property type="entry name" value="NADPH DEHYDROGENASE C23G7.10C-RELATED"/>
    <property type="match status" value="1"/>
</dbReference>
<dbReference type="Pfam" id="PF00724">
    <property type="entry name" value="Oxidored_FMN"/>
    <property type="match status" value="1"/>
</dbReference>
<dbReference type="SUPFAM" id="SSF51395">
    <property type="entry name" value="FMN-linked oxidoreductases"/>
    <property type="match status" value="1"/>
</dbReference>
<evidence type="ECO:0000255" key="1">
    <source>
        <dbReference type="HAMAP-Rule" id="MF_01614"/>
    </source>
</evidence>
<keyword id="KW-0216">Detoxification</keyword>
<keyword id="KW-0285">Flavoprotein</keyword>
<keyword id="KW-0288">FMN</keyword>
<keyword id="KW-0521">NADP</keyword>
<keyword id="KW-0560">Oxidoreductase</keyword>
<proteinExistence type="inferred from homology"/>
<accession>A7GNY4</accession>